<proteinExistence type="evidence at transcript level"/>
<evidence type="ECO:0000250" key="1"/>
<evidence type="ECO:0000250" key="2">
    <source>
        <dbReference type="UniProtKB" id="P15379"/>
    </source>
</evidence>
<evidence type="ECO:0000250" key="3">
    <source>
        <dbReference type="UniProtKB" id="P16070"/>
    </source>
</evidence>
<evidence type="ECO:0000255" key="4"/>
<evidence type="ECO:0000255" key="5">
    <source>
        <dbReference type="PROSITE-ProRule" id="PRU00323"/>
    </source>
</evidence>
<evidence type="ECO:0000256" key="6">
    <source>
        <dbReference type="SAM" id="MobiDB-lite"/>
    </source>
</evidence>
<dbReference type="EMBL" id="Z27115">
    <property type="protein sequence ID" value="CAA81630.1"/>
    <property type="molecule type" value="mRNA"/>
</dbReference>
<dbReference type="PIR" id="S45305">
    <property type="entry name" value="S45305"/>
</dbReference>
<dbReference type="SMR" id="Q28284"/>
<dbReference type="FunCoup" id="Q28284">
    <property type="interactions" value="61"/>
</dbReference>
<dbReference type="GlyCosmos" id="Q28284">
    <property type="glycosylation" value="6 sites, No reported glycans"/>
</dbReference>
<dbReference type="SwissPalm" id="Q28284"/>
<dbReference type="eggNOG" id="ENOG502RX7Q">
    <property type="taxonomic scope" value="Eukaryota"/>
</dbReference>
<dbReference type="InParanoid" id="Q28284"/>
<dbReference type="OrthoDB" id="9938473at2759"/>
<dbReference type="Proteomes" id="UP000002254">
    <property type="component" value="Unplaced"/>
</dbReference>
<dbReference type="Proteomes" id="UP000694429">
    <property type="component" value="Unplaced"/>
</dbReference>
<dbReference type="Proteomes" id="UP000694542">
    <property type="component" value="Unplaced"/>
</dbReference>
<dbReference type="Proteomes" id="UP000805418">
    <property type="component" value="Unplaced"/>
</dbReference>
<dbReference type="GO" id="GO:0016324">
    <property type="term" value="C:apical plasma membrane"/>
    <property type="evidence" value="ECO:0000250"/>
    <property type="project" value="UniProtKB"/>
</dbReference>
<dbReference type="GO" id="GO:0016323">
    <property type="term" value="C:basolateral plasma membrane"/>
    <property type="evidence" value="ECO:0000318"/>
    <property type="project" value="GO_Central"/>
</dbReference>
<dbReference type="GO" id="GO:0042995">
    <property type="term" value="C:cell projection"/>
    <property type="evidence" value="ECO:0000250"/>
    <property type="project" value="UniProtKB"/>
</dbReference>
<dbReference type="GO" id="GO:0005576">
    <property type="term" value="C:extracellular region"/>
    <property type="evidence" value="ECO:0007669"/>
    <property type="project" value="UniProtKB-SubCell"/>
</dbReference>
<dbReference type="GO" id="GO:0031258">
    <property type="term" value="C:lamellipodium membrane"/>
    <property type="evidence" value="ECO:0000250"/>
    <property type="project" value="UniProtKB"/>
</dbReference>
<dbReference type="GO" id="GO:0035692">
    <property type="term" value="C:macrophage migration inhibitory factor receptor complex"/>
    <property type="evidence" value="ECO:0000318"/>
    <property type="project" value="GO_Central"/>
</dbReference>
<dbReference type="GO" id="GO:0005902">
    <property type="term" value="C:microvillus"/>
    <property type="evidence" value="ECO:0000250"/>
    <property type="project" value="UniProtKB"/>
</dbReference>
<dbReference type="GO" id="GO:0005886">
    <property type="term" value="C:plasma membrane"/>
    <property type="evidence" value="ECO:0000250"/>
    <property type="project" value="UniProtKB"/>
</dbReference>
<dbReference type="GO" id="GO:0005540">
    <property type="term" value="F:hyaluronic acid binding"/>
    <property type="evidence" value="ECO:0000318"/>
    <property type="project" value="GO_Central"/>
</dbReference>
<dbReference type="GO" id="GO:0004888">
    <property type="term" value="F:transmembrane signaling receptor activity"/>
    <property type="evidence" value="ECO:0000318"/>
    <property type="project" value="GO_Central"/>
</dbReference>
<dbReference type="GO" id="GO:0007155">
    <property type="term" value="P:cell adhesion"/>
    <property type="evidence" value="ECO:0000318"/>
    <property type="project" value="GO_Central"/>
</dbReference>
<dbReference type="GO" id="GO:0019221">
    <property type="term" value="P:cytokine-mediated signaling pathway"/>
    <property type="evidence" value="ECO:0007669"/>
    <property type="project" value="GOC"/>
</dbReference>
<dbReference type="GO" id="GO:0006954">
    <property type="term" value="P:inflammatory response"/>
    <property type="evidence" value="ECO:0000318"/>
    <property type="project" value="GO_Central"/>
</dbReference>
<dbReference type="GO" id="GO:0070374">
    <property type="term" value="P:positive regulation of ERK1 and ERK2 cascade"/>
    <property type="evidence" value="ECO:0000318"/>
    <property type="project" value="GO_Central"/>
</dbReference>
<dbReference type="GO" id="GO:2000392">
    <property type="term" value="P:regulation of lamellipodium morphogenesis"/>
    <property type="evidence" value="ECO:0000250"/>
    <property type="project" value="UniProtKB"/>
</dbReference>
<dbReference type="GO" id="GO:0044319">
    <property type="term" value="P:wound healing, spreading of cells"/>
    <property type="evidence" value="ECO:0000250"/>
    <property type="project" value="UniProtKB"/>
</dbReference>
<dbReference type="CDD" id="cd03516">
    <property type="entry name" value="Link_domain_CD44_like"/>
    <property type="match status" value="1"/>
</dbReference>
<dbReference type="FunFam" id="3.10.100.10:FF:000004">
    <property type="entry name" value="CD44 antigen isoform X2"/>
    <property type="match status" value="1"/>
</dbReference>
<dbReference type="Gene3D" id="3.10.100.10">
    <property type="entry name" value="Mannose-Binding Protein A, subunit A"/>
    <property type="match status" value="1"/>
</dbReference>
<dbReference type="InterPro" id="IPR016186">
    <property type="entry name" value="C-type_lectin-like/link_sf"/>
</dbReference>
<dbReference type="InterPro" id="IPR001231">
    <property type="entry name" value="CD44_antigen"/>
</dbReference>
<dbReference type="InterPro" id="IPR043210">
    <property type="entry name" value="CD44_antigen-like"/>
</dbReference>
<dbReference type="InterPro" id="IPR016187">
    <property type="entry name" value="CTDL_fold"/>
</dbReference>
<dbReference type="InterPro" id="IPR000538">
    <property type="entry name" value="Link_dom"/>
</dbReference>
<dbReference type="PANTHER" id="PTHR10225:SF6">
    <property type="entry name" value="CD44 ANTIGEN"/>
    <property type="match status" value="1"/>
</dbReference>
<dbReference type="PANTHER" id="PTHR10225">
    <property type="entry name" value="HYALURONAN RECEPTOR"/>
    <property type="match status" value="1"/>
</dbReference>
<dbReference type="Pfam" id="PF00193">
    <property type="entry name" value="Xlink"/>
    <property type="match status" value="1"/>
</dbReference>
<dbReference type="PRINTS" id="PR00658">
    <property type="entry name" value="CD44"/>
</dbReference>
<dbReference type="PRINTS" id="PR01265">
    <property type="entry name" value="LINKMODULE"/>
</dbReference>
<dbReference type="SMART" id="SM00445">
    <property type="entry name" value="LINK"/>
    <property type="match status" value="1"/>
</dbReference>
<dbReference type="SUPFAM" id="SSF56436">
    <property type="entry name" value="C-type lectin-like"/>
    <property type="match status" value="1"/>
</dbReference>
<dbReference type="PROSITE" id="PS01241">
    <property type="entry name" value="LINK_1"/>
    <property type="match status" value="1"/>
</dbReference>
<dbReference type="PROSITE" id="PS50963">
    <property type="entry name" value="LINK_2"/>
    <property type="match status" value="1"/>
</dbReference>
<protein>
    <recommendedName>
        <fullName>CD44 antigen</fullName>
    </recommendedName>
    <alternativeName>
        <fullName>Extracellular matrix receptor-III</fullName>
        <shortName>ECMR-III</shortName>
    </alternativeName>
    <alternativeName>
        <fullName>GP90 lymphocyte homing/adhesion receptor</fullName>
    </alternativeName>
    <alternativeName>
        <fullName>HUTCH-I</fullName>
    </alternativeName>
    <alternativeName>
        <fullName>Hermes antigen</fullName>
    </alternativeName>
    <alternativeName>
        <fullName>Hyaluronate receptor</fullName>
    </alternativeName>
    <alternativeName>
        <fullName>Phagocytic glycoprotein 1</fullName>
        <shortName>PGP-1</shortName>
    </alternativeName>
    <alternativeName>
        <fullName>Phagocytic glycoprotein I</fullName>
        <shortName>PGP-I</shortName>
    </alternativeName>
    <cdAntigenName>CD44</cdAntigenName>
</protein>
<organism>
    <name type="scientific">Canis lupus familiaris</name>
    <name type="common">Dog</name>
    <name type="synonym">Canis familiaris</name>
    <dbReference type="NCBI Taxonomy" id="9615"/>
    <lineage>
        <taxon>Eukaryota</taxon>
        <taxon>Metazoa</taxon>
        <taxon>Chordata</taxon>
        <taxon>Craniata</taxon>
        <taxon>Vertebrata</taxon>
        <taxon>Euteleostomi</taxon>
        <taxon>Mammalia</taxon>
        <taxon>Eutheria</taxon>
        <taxon>Laurasiatheria</taxon>
        <taxon>Carnivora</taxon>
        <taxon>Caniformia</taxon>
        <taxon>Canidae</taxon>
        <taxon>Canis</taxon>
    </lineage>
</organism>
<feature type="signal peptide" evidence="4">
    <location>
        <begin position="1" status="less than"/>
        <end position="13"/>
    </location>
</feature>
<feature type="chain" id="PRO_0000026684" description="CD44 antigen">
    <location>
        <begin position="14"/>
        <end position="351" status="greater than"/>
    </location>
</feature>
<feature type="topological domain" description="Extracellular" evidence="4">
    <location>
        <begin position="14"/>
        <end position="263"/>
    </location>
</feature>
<feature type="transmembrane region" description="Helical" evidence="4">
    <location>
        <begin position="264"/>
        <end position="284"/>
    </location>
</feature>
<feature type="topological domain" description="Cytoplasmic" evidence="4">
    <location>
        <begin position="285"/>
        <end position="351" status="greater than"/>
    </location>
</feature>
<feature type="domain" description="Link" evidence="5">
    <location>
        <begin position="25"/>
        <end position="113"/>
    </location>
</feature>
<feature type="region of interest" description="Disordered" evidence="6">
    <location>
        <begin position="143"/>
        <end position="182"/>
    </location>
</feature>
<feature type="region of interest" description="Disordered" evidence="6">
    <location>
        <begin position="194"/>
        <end position="256"/>
    </location>
</feature>
<feature type="region of interest" description="Stem">
    <location>
        <begin position="218"/>
        <end position="263"/>
    </location>
</feature>
<feature type="region of interest" description="Required for interaction with EZR, MSN and RDX and for co-localization to microvilli" evidence="2">
    <location>
        <begin position="287"/>
        <end position="305"/>
    </location>
</feature>
<feature type="region of interest" description="Disordered" evidence="6">
    <location>
        <begin position="329"/>
        <end position="351"/>
    </location>
</feature>
<feature type="compositionally biased region" description="Basic and acidic residues" evidence="6">
    <location>
        <begin position="144"/>
        <end position="158"/>
    </location>
</feature>
<feature type="compositionally biased region" description="Low complexity" evidence="6">
    <location>
        <begin position="172"/>
        <end position="182"/>
    </location>
</feature>
<feature type="compositionally biased region" description="Polar residues" evidence="6">
    <location>
        <begin position="204"/>
        <end position="213"/>
    </location>
</feature>
<feature type="compositionally biased region" description="Basic and acidic residues" evidence="6">
    <location>
        <begin position="214"/>
        <end position="230"/>
    </location>
</feature>
<feature type="compositionally biased region" description="Low complexity" evidence="6">
    <location>
        <begin position="232"/>
        <end position="249"/>
    </location>
</feature>
<feature type="compositionally biased region" description="Polar residues" evidence="6">
    <location>
        <begin position="334"/>
        <end position="351"/>
    </location>
</feature>
<feature type="binding site" evidence="1">
    <location>
        <position position="34"/>
    </location>
    <ligand>
        <name>hyaluronan</name>
        <dbReference type="ChEBI" id="CHEBI:132153"/>
    </ligand>
</feature>
<feature type="binding site" evidence="1">
    <location>
        <position position="71"/>
    </location>
    <ligand>
        <name>hyaluronan</name>
        <dbReference type="ChEBI" id="CHEBI:132153"/>
    </ligand>
</feature>
<feature type="binding site" evidence="1">
    <location>
        <position position="72"/>
    </location>
    <ligand>
        <name>hyaluronan</name>
        <dbReference type="ChEBI" id="CHEBI:132153"/>
    </ligand>
</feature>
<feature type="binding site" evidence="1">
    <location>
        <position position="98"/>
    </location>
    <ligand>
        <name>hyaluronan</name>
        <dbReference type="ChEBI" id="CHEBI:132153"/>
    </ligand>
</feature>
<feature type="modified residue" description="Phosphoserine; by PKC" evidence="3">
    <location>
        <position position="286"/>
    </location>
</feature>
<feature type="modified residue" description="Phosphoserine" evidence="2">
    <location>
        <position position="311"/>
    </location>
</feature>
<feature type="modified residue" description="Phosphoserine" evidence="3">
    <location>
        <position position="320"/>
    </location>
</feature>
<feature type="glycosylation site" description="N-linked (GlcNAc...) asparagine" evidence="4">
    <location>
        <position position="18"/>
    </location>
</feature>
<feature type="glycosylation site" description="N-linked (GlcNAc...) asparagine" evidence="4">
    <location>
        <position position="50"/>
    </location>
</feature>
<feature type="glycosylation site" description="N-linked (GlcNAc...) asparagine" evidence="4">
    <location>
        <position position="93"/>
    </location>
</feature>
<feature type="glycosylation site" description="N-linked (GlcNAc...) asparagine" evidence="4">
    <location>
        <position position="103"/>
    </location>
</feature>
<feature type="glycosylation site" description="N-linked (GlcNAc...) asparagine" evidence="4">
    <location>
        <position position="113"/>
    </location>
</feature>
<feature type="glycosylation site" description="O-linked (Xyl...) (chondroitin sulfate) serine" evidence="3">
    <location>
        <position position="173"/>
    </location>
</feature>
<feature type="glycosylation site" description="N-linked (GlcNAc...) asparagine" evidence="4">
    <location>
        <position position="250"/>
    </location>
</feature>
<feature type="disulfide bond" evidence="5">
    <location>
        <begin position="21"/>
        <end position="122"/>
    </location>
</feature>
<feature type="disulfide bond" evidence="5">
    <location>
        <begin position="46"/>
        <end position="111"/>
    </location>
</feature>
<feature type="disulfide bond" evidence="5">
    <location>
        <begin position="70"/>
        <end position="90"/>
    </location>
</feature>
<feature type="non-terminal residue">
    <location>
        <position position="1"/>
    </location>
</feature>
<feature type="non-terminal residue">
    <location>
        <position position="351"/>
    </location>
</feature>
<gene>
    <name type="primary">CD44</name>
</gene>
<sequence length="351" mass="38066">LAWGLCLLRLSLAQIDLNITCRYAGVFHVEKNGRYSISRTAAADLCKAFNSTLPTMAQMERALSVGFETCRYGFIEGHVVIPRIQPNAICAANHTGVYILISNTSQYDTYCFNASAPPEEDCTSVTHLPNAFDGPITITIVNRDGTRYSQKGEYRTNPEDINPSNPTDDDVSSGSSSERSTSAGYNIFHTHLPTAYPTEDQDSSRVSSNSDHTPITKDHDSSVHPSERSHTTHGSESAGHSSGSQEGGANTTSGPMRKPQIPEWLIILASLLALALILAVCIAVNSRRRCGQKKKLVINNGNGAVGDRKPSGINGEASKSQEMVHLVNKEPSETPDQYTTADETRNLQNVD</sequence>
<comment type="function">
    <text evidence="2 3">Cell-surface receptor that plays a role in cell-cell interactions, cell adhesion and migration, helping them to sense and respond to changes in the tissue microenvironment. Participates thereby in a wide variety of cellular functions including the activation, recirculation and homing of T-lymphocytes, hematopoiesis, inflammation and response to bacterial infection. Engages, through its ectodomain, extracellular matrix components such as hyaluronan/HA, collagen, growth factors, cytokines or proteases and serves as a platform for signal transduction by assembling, via its cytoplasmic domain, protein complexes containing receptor kinases and membrane proteases. Such effectors include PKN2, the RhoGTPases RAC1 and RHOA, Rho-kinases and phospholipase C that coordinate signaling pathways promoting calcium mobilization and actin-mediated cytoskeleton reorganization essential for cell migration and adhesion.</text>
</comment>
<comment type="subunit">
    <text evidence="2 3">Interacts with PKN2 (By similarity). Interacts with TIAM1 and TIAM2 (By similarity). Interacts with HA, as well as other glycosaminoglycans, collagen, laminin, and fibronectin via its N-terminal segment. Interacts with UNC119. Interacts with PDPN (via extracellular domain); this interaction is required for PDPN-mediated directional migration and regulation of lamellipodia extension/stabilization during cell spreading and migration (By similarity). Interacts with RDX, EZR and MSN (By similarity). Interacts with EGFR (By similarity). Interacts with CD74; this complex is essential for the MIF-induced signaling cascade that results in B cell survival (By similarity).</text>
</comment>
<comment type="subcellular location">
    <subcellularLocation>
        <location evidence="2">Cell membrane</location>
        <topology evidence="2">Single-pass type I membrane protein</topology>
    </subcellularLocation>
    <subcellularLocation>
        <location evidence="2">Cell projection</location>
        <location evidence="2">Microvillus</location>
    </subcellularLocation>
    <subcellularLocation>
        <location evidence="3">Secreted</location>
    </subcellularLocation>
    <text evidence="2">Colocalizes with actin in membrane protrusions at wounding edges. Co-localizes with RDX, EZR and MSN in microvilli.</text>
</comment>
<comment type="tissue specificity">
    <text>Lymph nodes.</text>
</comment>
<comment type="domain">
    <text evidence="1">The lectin-like LINK domain is responsible for hyaluronan binding.</text>
</comment>
<comment type="PTM">
    <text evidence="3">Phosphorylated; activation of PKC results in the dephosphorylation of Ser-320 (constitutive phosphorylation site), and the phosphorylation of Ser-286.</text>
</comment>
<comment type="PTM">
    <text evidence="3">N-glycosylated.</text>
</comment>
<comment type="PTM">
    <text evidence="3">O-glycosylated; contains chondroitin sulfate glycans which can be more or less sulfated.</text>
</comment>
<accession>Q28284</accession>
<name>CD44_CANLF</name>
<reference key="1">
    <citation type="journal article" date="1994" name="Biochim. Biophys. Acta">
        <title>Molecular cloning of the canine CD44 antigen cDNA.</title>
        <authorList>
            <person name="Milde K.F."/>
            <person name="Alejandro R."/>
            <person name="Mintz D.H."/>
            <person name="Pastori R.L."/>
        </authorList>
    </citation>
    <scope>NUCLEOTIDE SEQUENCE [MRNA]</scope>
    <source>
        <strain>Beagle</strain>
        <tissue>Thymus</tissue>
    </source>
</reference>
<keyword id="KW-0130">Cell adhesion</keyword>
<keyword id="KW-1003">Cell membrane</keyword>
<keyword id="KW-0966">Cell projection</keyword>
<keyword id="KW-1015">Disulfide bond</keyword>
<keyword id="KW-0325">Glycoprotein</keyword>
<keyword id="KW-0472">Membrane</keyword>
<keyword id="KW-0597">Phosphoprotein</keyword>
<keyword id="KW-0654">Proteoglycan</keyword>
<keyword id="KW-0675">Receptor</keyword>
<keyword id="KW-1185">Reference proteome</keyword>
<keyword id="KW-0964">Secreted</keyword>
<keyword id="KW-0732">Signal</keyword>
<keyword id="KW-0812">Transmembrane</keyword>
<keyword id="KW-1133">Transmembrane helix</keyword>